<keyword id="KW-0025">Alternative splicing</keyword>
<keyword id="KW-0049">Antioxidant</keyword>
<keyword id="KW-0963">Cytoplasm</keyword>
<keyword id="KW-0464">Manganese</keyword>
<keyword id="KW-0479">Metal-binding</keyword>
<keyword id="KW-0496">Mitochondrion</keyword>
<keyword id="KW-0560">Oxidoreductase</keyword>
<keyword id="KW-0809">Transit peptide</keyword>
<proteinExistence type="evidence at protein level"/>
<comment type="function">
    <text evidence="4 5">Destroys radicals which are normally produced within the cells and which are toxic to biological systems.</text>
</comment>
<comment type="function">
    <molecule>Isoform 1</molecule>
    <text evidence="6">Destroys mitochondrial radicals produced by oxidative stress.</text>
</comment>
<comment type="function">
    <molecule>Isoform 2</molecule>
    <text evidence="6">Destroys cytoplasmic radicals produced in low copper environments; a condition which inactivates the cytoplasmic copper-dependent superoxide dismutase SOD1.</text>
</comment>
<comment type="catalytic activity">
    <reaction evidence="10">
        <text>2 superoxide + 2 H(+) = H2O2 + O2</text>
        <dbReference type="Rhea" id="RHEA:20696"/>
        <dbReference type="ChEBI" id="CHEBI:15378"/>
        <dbReference type="ChEBI" id="CHEBI:15379"/>
        <dbReference type="ChEBI" id="CHEBI:16240"/>
        <dbReference type="ChEBI" id="CHEBI:18421"/>
        <dbReference type="EC" id="1.15.1.1"/>
    </reaction>
</comment>
<comment type="cofactor">
    <cofactor evidence="2">
        <name>Mn(2+)</name>
        <dbReference type="ChEBI" id="CHEBI:29035"/>
    </cofactor>
    <text evidence="2">Binds 1 Mn(2+) ion per subunit.</text>
</comment>
<comment type="subcellular location">
    <molecule>Isoform 1</molecule>
    <subcellularLocation>
        <location evidence="6">Mitochondrion</location>
    </subcellularLocation>
    <text evidence="6">Localizes to the mitochondrion both in copper-replete and copper-limiting conditions.</text>
</comment>
<comment type="subcellular location">
    <molecule>Isoform 2</molecule>
    <subcellularLocation>
        <location evidence="6">Cytoplasm</location>
    </subcellularLocation>
</comment>
<comment type="alternative products">
    <event type="alternative splicing"/>
    <isoform>
        <id>J9VWW9-1</id>
        <name evidence="8">1</name>
        <sequence type="displayed"/>
    </isoform>
    <isoform>
        <id>J9VWW9-2</id>
        <name evidence="8">2</name>
        <sequence type="described" ref="VSP_061114"/>
    </isoform>
</comment>
<comment type="induction">
    <molecule>Isoform 2</molecule>
    <text evidence="6">Repressed when copper levels are low in a CUF1-dependent manner (at protein level).</text>
</comment>
<comment type="disruption phenotype">
    <text evidence="5 6">Decreases cellular superoxide dismutase activity (PubMed:16524904). Sensitive to thermal stress, and menadione (induces oxidative stress) (PubMed:33567338). Decreases virulence in a mouse model of infection (PubMed:33567338).</text>
</comment>
<comment type="similarity">
    <text evidence="9">Belongs to the iron/manganese superoxide dismutase family.</text>
</comment>
<dbReference type="EC" id="1.15.1.1" evidence="10"/>
<dbReference type="EMBL" id="CP003828">
    <property type="protein sequence ID" value="AFR97119.1"/>
    <property type="molecule type" value="Genomic_DNA"/>
</dbReference>
<dbReference type="RefSeq" id="XP_012051781.1">
    <molecule id="J9VWW9-1"/>
    <property type="nucleotide sequence ID" value="XM_012196391.1"/>
</dbReference>
<dbReference type="SMR" id="J9VWW9"/>
<dbReference type="GeneID" id="23887823"/>
<dbReference type="KEGG" id="cng:CNAG_04388"/>
<dbReference type="VEuPathDB" id="FungiDB:CNAG_04388"/>
<dbReference type="HOGENOM" id="CLU_031625_2_0_1"/>
<dbReference type="OrthoDB" id="3576at5206"/>
<dbReference type="Proteomes" id="UP000010091">
    <property type="component" value="Chromosome 9"/>
</dbReference>
<dbReference type="GO" id="GO:0005829">
    <property type="term" value="C:cytosol"/>
    <property type="evidence" value="ECO:0000314"/>
    <property type="project" value="UniProtKB"/>
</dbReference>
<dbReference type="GO" id="GO:0005739">
    <property type="term" value="C:mitochondrion"/>
    <property type="evidence" value="ECO:0000314"/>
    <property type="project" value="UniProtKB"/>
</dbReference>
<dbReference type="GO" id="GO:0030145">
    <property type="term" value="F:manganese ion binding"/>
    <property type="evidence" value="ECO:0007669"/>
    <property type="project" value="TreeGrafter"/>
</dbReference>
<dbReference type="GO" id="GO:0004784">
    <property type="term" value="F:superoxide dismutase activity"/>
    <property type="evidence" value="ECO:0000315"/>
    <property type="project" value="UniProtKB"/>
</dbReference>
<dbReference type="GO" id="GO:0019430">
    <property type="term" value="P:removal of superoxide radicals"/>
    <property type="evidence" value="ECO:0000315"/>
    <property type="project" value="UniProtKB"/>
</dbReference>
<dbReference type="GO" id="GO:0052164">
    <property type="term" value="P:symbiont defense to host-produced reactive oxygen species"/>
    <property type="evidence" value="ECO:0000315"/>
    <property type="project" value="UniProtKB"/>
</dbReference>
<dbReference type="FunFam" id="1.10.287.990:FF:000001">
    <property type="entry name" value="Superoxide dismutase"/>
    <property type="match status" value="1"/>
</dbReference>
<dbReference type="FunFam" id="3.55.40.20:FF:000002">
    <property type="entry name" value="Superoxide dismutase"/>
    <property type="match status" value="1"/>
</dbReference>
<dbReference type="Gene3D" id="1.10.287.990">
    <property type="entry name" value="Fe,Mn superoxide dismutase (SOD) domain"/>
    <property type="match status" value="1"/>
</dbReference>
<dbReference type="Gene3D" id="3.55.40.20">
    <property type="entry name" value="Iron/manganese superoxide dismutase, C-terminal domain"/>
    <property type="match status" value="1"/>
</dbReference>
<dbReference type="InterPro" id="IPR050265">
    <property type="entry name" value="Fe/Mn_Superoxide_Dismutase"/>
</dbReference>
<dbReference type="InterPro" id="IPR001189">
    <property type="entry name" value="Mn/Fe_SOD"/>
</dbReference>
<dbReference type="InterPro" id="IPR019833">
    <property type="entry name" value="Mn/Fe_SOD_BS"/>
</dbReference>
<dbReference type="InterPro" id="IPR019832">
    <property type="entry name" value="Mn/Fe_SOD_C"/>
</dbReference>
<dbReference type="InterPro" id="IPR019831">
    <property type="entry name" value="Mn/Fe_SOD_N"/>
</dbReference>
<dbReference type="InterPro" id="IPR036324">
    <property type="entry name" value="Mn/Fe_SOD_N_sf"/>
</dbReference>
<dbReference type="InterPro" id="IPR036314">
    <property type="entry name" value="SOD_C_sf"/>
</dbReference>
<dbReference type="PANTHER" id="PTHR11404">
    <property type="entry name" value="SUPEROXIDE DISMUTASE 2"/>
    <property type="match status" value="1"/>
</dbReference>
<dbReference type="PANTHER" id="PTHR11404:SF6">
    <property type="entry name" value="SUPEROXIDE DISMUTASE [MN], MITOCHONDRIAL"/>
    <property type="match status" value="1"/>
</dbReference>
<dbReference type="Pfam" id="PF02777">
    <property type="entry name" value="Sod_Fe_C"/>
    <property type="match status" value="1"/>
</dbReference>
<dbReference type="Pfam" id="PF00081">
    <property type="entry name" value="Sod_Fe_N"/>
    <property type="match status" value="1"/>
</dbReference>
<dbReference type="PIRSF" id="PIRSF000349">
    <property type="entry name" value="SODismutase"/>
    <property type="match status" value="1"/>
</dbReference>
<dbReference type="PRINTS" id="PR01703">
    <property type="entry name" value="MNSODISMTASE"/>
</dbReference>
<dbReference type="SUPFAM" id="SSF54719">
    <property type="entry name" value="Fe,Mn superoxide dismutase (SOD), C-terminal domain"/>
    <property type="match status" value="1"/>
</dbReference>
<dbReference type="SUPFAM" id="SSF46609">
    <property type="entry name" value="Fe,Mn superoxide dismutase (SOD), N-terminal domain"/>
    <property type="match status" value="1"/>
</dbReference>
<dbReference type="PROSITE" id="PS00088">
    <property type="entry name" value="SOD_MN"/>
    <property type="match status" value="1"/>
</dbReference>
<name>SODM_CRYNH</name>
<evidence type="ECO:0000250" key="1">
    <source>
        <dbReference type="UniProtKB" id="P04179"/>
    </source>
</evidence>
<evidence type="ECO:0000250" key="2">
    <source>
        <dbReference type="UniProtKB" id="Q9UQX0"/>
    </source>
</evidence>
<evidence type="ECO:0000255" key="3"/>
<evidence type="ECO:0000269" key="4">
    <source>
    </source>
</evidence>
<evidence type="ECO:0000269" key="5">
    <source>
    </source>
</evidence>
<evidence type="ECO:0000269" key="6">
    <source>
    </source>
</evidence>
<evidence type="ECO:0000303" key="7">
    <source>
    </source>
</evidence>
<evidence type="ECO:0000303" key="8">
    <source>
    </source>
</evidence>
<evidence type="ECO:0000305" key="9"/>
<evidence type="ECO:0000305" key="10">
    <source>
    </source>
</evidence>
<evidence type="ECO:0000312" key="11">
    <source>
        <dbReference type="EMBL" id="AFR97119.1"/>
    </source>
</evidence>
<evidence type="ECO:0000312" key="12">
    <source>
        <dbReference type="Proteomes" id="UP000010091"/>
    </source>
</evidence>
<protein>
    <recommendedName>
        <fullName evidence="9">Superoxide dismutase [Mn], mitochondrial</fullName>
        <ecNumber evidence="10">1.15.1.1</ecNumber>
    </recommendedName>
</protein>
<feature type="transit peptide" description="Mitochondrion" evidence="6">
    <location>
        <begin position="1"/>
        <end position="27"/>
    </location>
</feature>
<feature type="chain" id="PRO_0000453195" description="Superoxide dismutase [Mn], mitochondrial" evidence="3">
    <location>
        <begin position="28"/>
        <end position="225"/>
    </location>
</feature>
<feature type="binding site" evidence="1">
    <location>
        <position position="53"/>
    </location>
    <ligand>
        <name>Mn(2+)</name>
        <dbReference type="ChEBI" id="CHEBI:29035"/>
    </ligand>
</feature>
<feature type="binding site" evidence="1">
    <location>
        <position position="101"/>
    </location>
    <ligand>
        <name>Mn(2+)</name>
        <dbReference type="ChEBI" id="CHEBI:29035"/>
    </ligand>
</feature>
<feature type="binding site" evidence="1">
    <location>
        <position position="187"/>
    </location>
    <ligand>
        <name>Mn(2+)</name>
        <dbReference type="ChEBI" id="CHEBI:29035"/>
    </ligand>
</feature>
<feature type="binding site" evidence="1">
    <location>
        <position position="191"/>
    </location>
    <ligand>
        <name>Mn(2+)</name>
        <dbReference type="ChEBI" id="CHEBI:29035"/>
    </ligand>
</feature>
<feature type="splice variant" id="VSP_061114" description="In isoform 2." evidence="6">
    <location>
        <begin position="1"/>
        <end position="21"/>
    </location>
</feature>
<feature type="mutagenesis site" description="Sensitive to thermal stress." evidence="6">
    <location>
        <begin position="1"/>
        <end position="21"/>
    </location>
</feature>
<organism evidence="12">
    <name type="scientific">Cryptococcus neoformans var. grubii serotype A (strain H99 / ATCC 208821 / CBS 10515 / FGSC 9487)</name>
    <name type="common">Filobasidiella neoformans var. grubii</name>
    <dbReference type="NCBI Taxonomy" id="235443"/>
    <lineage>
        <taxon>Eukaryota</taxon>
        <taxon>Fungi</taxon>
        <taxon>Dikarya</taxon>
        <taxon>Basidiomycota</taxon>
        <taxon>Agaricomycotina</taxon>
        <taxon>Tremellomycetes</taxon>
        <taxon>Tremellales</taxon>
        <taxon>Cryptococcaceae</taxon>
        <taxon>Cryptococcus</taxon>
        <taxon>Cryptococcus neoformans species complex</taxon>
    </lineage>
</organism>
<accession>J9VWW9</accession>
<gene>
    <name evidence="7" type="primary">SOD2</name>
    <name evidence="11" type="ORF">CNAG_04388</name>
</gene>
<reference evidence="12" key="1">
    <citation type="journal article" date="2014" name="PLoS Genet.">
        <title>Analysis of the genome and transcriptome of Cryptococcus neoformans var. grubii reveals complex RNA expression and microevolution leading to virulence attenuation.</title>
        <authorList>
            <person name="Janbon G."/>
            <person name="Ormerod K.L."/>
            <person name="Paulet D."/>
            <person name="Byrnes E.J. III"/>
            <person name="Yadav V."/>
            <person name="Chatterjee G."/>
            <person name="Mullapudi N."/>
            <person name="Hon C.-C."/>
            <person name="Billmyre R.B."/>
            <person name="Brunel F."/>
            <person name="Bahn Y.-S."/>
            <person name="Chen W."/>
            <person name="Chen Y."/>
            <person name="Chow E.W.L."/>
            <person name="Coppee J.-Y."/>
            <person name="Floyd-Averette A."/>
            <person name="Gaillardin C."/>
            <person name="Gerik K.J."/>
            <person name="Goldberg J."/>
            <person name="Gonzalez-Hilarion S."/>
            <person name="Gujja S."/>
            <person name="Hamlin J.L."/>
            <person name="Hsueh Y.-P."/>
            <person name="Ianiri G."/>
            <person name="Jones S."/>
            <person name="Kodira C.D."/>
            <person name="Kozubowski L."/>
            <person name="Lam W."/>
            <person name="Marra M."/>
            <person name="Mesner L.D."/>
            <person name="Mieczkowski P.A."/>
            <person name="Moyrand F."/>
            <person name="Nielsen K."/>
            <person name="Proux C."/>
            <person name="Rossignol T."/>
            <person name="Schein J.E."/>
            <person name="Sun S."/>
            <person name="Wollschlaeger C."/>
            <person name="Wood I.A."/>
            <person name="Zeng Q."/>
            <person name="Neuveglise C."/>
            <person name="Newlon C.S."/>
            <person name="Perfect J.R."/>
            <person name="Lodge J.K."/>
            <person name="Idnurm A."/>
            <person name="Stajich J.E."/>
            <person name="Kronstad J.W."/>
            <person name="Sanyal K."/>
            <person name="Heitman J."/>
            <person name="Fraser J.A."/>
            <person name="Cuomo C.A."/>
            <person name="Dietrich F.S."/>
        </authorList>
    </citation>
    <scope>NUCLEOTIDE SEQUENCE [LARGE SCALE GENOMIC DNA]</scope>
    <source>
        <strain>H99 / ATCC 208821 / CBS 10515 / FGSC 9487</strain>
    </source>
</reference>
<reference evidence="9" key="2">
    <citation type="journal article" date="2005" name="Eukaryot. Cell">
        <title>Cryptococcus neoformans mitochondrial superoxide dismutase: an essential link between antioxidant function and high-temperature growth.</title>
        <authorList>
            <person name="Giles S.S."/>
            <person name="Batinic-Haberle I."/>
            <person name="Perfect J.R."/>
            <person name="Cox G.M."/>
        </authorList>
    </citation>
    <scope>FUNCTION</scope>
</reference>
<reference evidence="9" key="3">
    <citation type="journal article" date="2006" name="Eukaryot. Cell">
        <title>Lipid rafts in Cryptococcus neoformans concentrate the virulence determinants phospholipase B1 and Cu/Zn superoxide dismutase.</title>
        <authorList>
            <person name="Siafakas A.R."/>
            <person name="Wright L.C."/>
            <person name="Sorrell T.C."/>
            <person name="Djordjevic J.T."/>
        </authorList>
    </citation>
    <scope>FUNCTION</scope>
    <scope>DISRUPTION PHENOTYPE</scope>
</reference>
<reference evidence="9" key="4">
    <citation type="journal article" date="2021" name="J. Biol. Chem.">
        <title>Transcription factor-driven alternative localization of Cryptococcus neoformans superoxide dismutase.</title>
        <authorList>
            <person name="Smith A.D."/>
            <person name="Garcia-Santamarina S."/>
            <person name="Ralle M."/>
            <person name="Loiselle D.R."/>
            <person name="Haystead T.A."/>
            <person name="Thiele D.J."/>
        </authorList>
    </citation>
    <scope>FUNCTION (ISOFORMS 1 AND 2)</scope>
    <scope>CATALYTIC ACTIVITY</scope>
    <scope>SUBCELLULAR LOCATION (ISOFORMS 1 AND 2)</scope>
    <scope>ALTERNATIVE SPLICING (ISOFORMS 1 AND 2)</scope>
    <scope>INDUCTION</scope>
    <scope>DISRUPTION PHENOTYPE</scope>
    <scope>MUTAGENESIS OF 1-MET--THR-21</scope>
</reference>
<sequence>MITAITRTALPRATLRTSLATMSTIRAKHTLPPLPYAYDALEPSISAEIMNLHHTKHHQTYVNGLNAAEESLQKASADGDFKTAISLQPALKFNGGGHINHSLFWKNLAPTGSAQVKVPTSGVFYDQVQADFGGFENLKKEMNAKTAAIQGSGWGWLGYNKATKKLEIVTTPNQDPLLSHVPIIGIDIWEHAFYLQYKNVKPDYLNAIWNVINYEEAESRLKAAQ</sequence>